<evidence type="ECO:0000250" key="1"/>
<evidence type="ECO:0000255" key="2">
    <source>
        <dbReference type="PROSITE-ProRule" id="PRU00541"/>
    </source>
</evidence>
<evidence type="ECO:0000255" key="3">
    <source>
        <dbReference type="PROSITE-ProRule" id="PRU00542"/>
    </source>
</evidence>
<evidence type="ECO:0000256" key="4">
    <source>
        <dbReference type="SAM" id="MobiDB-lite"/>
    </source>
</evidence>
<evidence type="ECO:0000305" key="5"/>
<feature type="chain" id="PRO_0000232170" description="ATP-dependent RNA helicase dbp2">
    <location>
        <begin position="1"/>
        <end position="562"/>
    </location>
</feature>
<feature type="domain" description="Helicase ATP-binding" evidence="2">
    <location>
        <begin position="163"/>
        <end position="338"/>
    </location>
</feature>
<feature type="domain" description="Helicase C-terminal" evidence="3">
    <location>
        <begin position="370"/>
        <end position="515"/>
    </location>
</feature>
<feature type="region of interest" description="RNA-binding RGG-box" evidence="1">
    <location>
        <begin position="526"/>
        <end position="548"/>
    </location>
</feature>
<feature type="region of interest" description="Disordered" evidence="4">
    <location>
        <begin position="536"/>
        <end position="562"/>
    </location>
</feature>
<feature type="short sequence motif" description="Q motif">
    <location>
        <begin position="132"/>
        <end position="160"/>
    </location>
</feature>
<feature type="short sequence motif" description="DEAD box">
    <location>
        <begin position="286"/>
        <end position="289"/>
    </location>
</feature>
<feature type="compositionally biased region" description="Gly residues" evidence="4">
    <location>
        <begin position="536"/>
        <end position="550"/>
    </location>
</feature>
<feature type="binding site" evidence="2">
    <location>
        <begin position="176"/>
        <end position="183"/>
    </location>
    <ligand>
        <name>ATP</name>
        <dbReference type="ChEBI" id="CHEBI:30616"/>
    </ligand>
</feature>
<sequence>MSGSYGGGGYGGRGGGGGGYSNGYDRNGGGYSNNYSSHGGSNGYGGGGGGYGGGGGGYGGGGYGGGGGGDRMSALGAGLQKQNWDMSALPKFEKSFYQEHPSVANRSPAEVDKFRADHSIAVFGNNVPKPVETFDEAGFPRYVMDEVKAQGFPAPTAIQSQGWPMALSGRDVVGIAETGSGKTLTYCLPAIVHINAQPLLAPGDGPIVLILAPTRELAVQIQQEISKFGKSSRIRNTCVYGGVPKGPQIRDLSRGVEVCIATPGRLIDMLESGKTNLRRVTYLVLDEADRMLDMGFEPQIRKIIGQIRPDRQTLMWSATWPKEVRNLAADFLTDFIQVNIGSMDLAANHRITQIVEVVSESEKRDRMIKHLEKIMEGRENQNKILIFTGTKRVADDITRFLRQDGWPALSIHGDKQQNERDWVLDQFKTGKSPIMVATDVASRGIDVRNITHVLNYDYPNNSEDYIHRIGRTGRAGAKGTAITFFTTDNSKQARELVGVLQEAKQQIDPRLAEMARYSGGGGGRFGGYRGRGGGGWRGGRGGGGGGGSVGGANALPLNNRRW</sequence>
<accession>Q7SBC6</accession>
<organism>
    <name type="scientific">Neurospora crassa (strain ATCC 24698 / 74-OR23-1A / CBS 708.71 / DSM 1257 / FGSC 987)</name>
    <dbReference type="NCBI Taxonomy" id="367110"/>
    <lineage>
        <taxon>Eukaryota</taxon>
        <taxon>Fungi</taxon>
        <taxon>Dikarya</taxon>
        <taxon>Ascomycota</taxon>
        <taxon>Pezizomycotina</taxon>
        <taxon>Sordariomycetes</taxon>
        <taxon>Sordariomycetidae</taxon>
        <taxon>Sordariales</taxon>
        <taxon>Sordariaceae</taxon>
        <taxon>Neurospora</taxon>
    </lineage>
</organism>
<gene>
    <name type="primary">drh-1</name>
    <name type="synonym">dbp2</name>
    <name type="ORF">NCU07839</name>
</gene>
<keyword id="KW-0067">ATP-binding</keyword>
<keyword id="KW-0963">Cytoplasm</keyword>
<keyword id="KW-0347">Helicase</keyword>
<keyword id="KW-0378">Hydrolase</keyword>
<keyword id="KW-0866">Nonsense-mediated mRNA decay</keyword>
<keyword id="KW-0547">Nucleotide-binding</keyword>
<keyword id="KW-0539">Nucleus</keyword>
<keyword id="KW-1185">Reference proteome</keyword>
<keyword id="KW-0690">Ribosome biogenesis</keyword>
<keyword id="KW-0694">RNA-binding</keyword>
<keyword id="KW-0698">rRNA processing</keyword>
<protein>
    <recommendedName>
        <fullName>ATP-dependent RNA helicase dbp2</fullName>
        <ecNumber>3.6.4.13</ecNumber>
    </recommendedName>
    <alternativeName>
        <fullName>DEAD box RNA helicase 1</fullName>
    </alternativeName>
</protein>
<name>DBP2_NEUCR</name>
<dbReference type="EC" id="3.6.4.13"/>
<dbReference type="EMBL" id="CM002238">
    <property type="protein sequence ID" value="EAA33724.3"/>
    <property type="molecule type" value="Genomic_DNA"/>
</dbReference>
<dbReference type="RefSeq" id="XP_962960.3">
    <property type="nucleotide sequence ID" value="XM_957867.3"/>
</dbReference>
<dbReference type="SMR" id="Q7SBC6"/>
<dbReference type="FunCoup" id="Q7SBC6">
    <property type="interactions" value="1130"/>
</dbReference>
<dbReference type="STRING" id="367110.Q7SBC6"/>
<dbReference type="PaxDb" id="5141-EFNCRP00000007496"/>
<dbReference type="EnsemblFungi" id="EAA33724">
    <property type="protein sequence ID" value="EAA33724"/>
    <property type="gene ID" value="NCU07839"/>
</dbReference>
<dbReference type="GeneID" id="3879108"/>
<dbReference type="KEGG" id="ncr:NCU07839"/>
<dbReference type="VEuPathDB" id="FungiDB:NCU07839"/>
<dbReference type="HOGENOM" id="CLU_003041_16_9_1"/>
<dbReference type="InParanoid" id="Q7SBC6"/>
<dbReference type="OrthoDB" id="196131at2759"/>
<dbReference type="Proteomes" id="UP000001805">
    <property type="component" value="Chromosome 3, Linkage Group III"/>
</dbReference>
<dbReference type="GO" id="GO:0005737">
    <property type="term" value="C:cytoplasm"/>
    <property type="evidence" value="ECO:0000318"/>
    <property type="project" value="GO_Central"/>
</dbReference>
<dbReference type="GO" id="GO:0005634">
    <property type="term" value="C:nucleus"/>
    <property type="evidence" value="ECO:0000318"/>
    <property type="project" value="GO_Central"/>
</dbReference>
<dbReference type="GO" id="GO:1990904">
    <property type="term" value="C:ribonucleoprotein complex"/>
    <property type="evidence" value="ECO:0000318"/>
    <property type="project" value="GO_Central"/>
</dbReference>
<dbReference type="GO" id="GO:0005524">
    <property type="term" value="F:ATP binding"/>
    <property type="evidence" value="ECO:0007669"/>
    <property type="project" value="UniProtKB-KW"/>
</dbReference>
<dbReference type="GO" id="GO:0016887">
    <property type="term" value="F:ATP hydrolysis activity"/>
    <property type="evidence" value="ECO:0007669"/>
    <property type="project" value="RHEA"/>
</dbReference>
<dbReference type="GO" id="GO:0003729">
    <property type="term" value="F:mRNA binding"/>
    <property type="evidence" value="ECO:0000318"/>
    <property type="project" value="GO_Central"/>
</dbReference>
<dbReference type="GO" id="GO:0003724">
    <property type="term" value="F:RNA helicase activity"/>
    <property type="evidence" value="ECO:0000318"/>
    <property type="project" value="GO_Central"/>
</dbReference>
<dbReference type="GO" id="GO:0000380">
    <property type="term" value="P:alternative mRNA splicing, via spliceosome"/>
    <property type="evidence" value="ECO:0000318"/>
    <property type="project" value="GO_Central"/>
</dbReference>
<dbReference type="GO" id="GO:0000184">
    <property type="term" value="P:nuclear-transcribed mRNA catabolic process, nonsense-mediated decay"/>
    <property type="evidence" value="ECO:0007669"/>
    <property type="project" value="UniProtKB-KW"/>
</dbReference>
<dbReference type="GO" id="GO:0006364">
    <property type="term" value="P:rRNA processing"/>
    <property type="evidence" value="ECO:0000318"/>
    <property type="project" value="GO_Central"/>
</dbReference>
<dbReference type="CDD" id="cd17966">
    <property type="entry name" value="DEADc_DDX5_DDX17"/>
    <property type="match status" value="1"/>
</dbReference>
<dbReference type="CDD" id="cd18787">
    <property type="entry name" value="SF2_C_DEAD"/>
    <property type="match status" value="1"/>
</dbReference>
<dbReference type="FunFam" id="3.40.50.300:FF:000008">
    <property type="entry name" value="ATP-dependent RNA helicase RhlB"/>
    <property type="match status" value="1"/>
</dbReference>
<dbReference type="FunFam" id="3.40.50.300:FF:000079">
    <property type="entry name" value="probable ATP-dependent RNA helicase DDX17"/>
    <property type="match status" value="1"/>
</dbReference>
<dbReference type="Gene3D" id="3.40.50.300">
    <property type="entry name" value="P-loop containing nucleotide triphosphate hydrolases"/>
    <property type="match status" value="2"/>
</dbReference>
<dbReference type="InterPro" id="IPR011545">
    <property type="entry name" value="DEAD/DEAH_box_helicase_dom"/>
</dbReference>
<dbReference type="InterPro" id="IPR014001">
    <property type="entry name" value="Helicase_ATP-bd"/>
</dbReference>
<dbReference type="InterPro" id="IPR001650">
    <property type="entry name" value="Helicase_C-like"/>
</dbReference>
<dbReference type="InterPro" id="IPR027417">
    <property type="entry name" value="P-loop_NTPase"/>
</dbReference>
<dbReference type="InterPro" id="IPR000629">
    <property type="entry name" value="RNA-helicase_DEAD-box_CS"/>
</dbReference>
<dbReference type="InterPro" id="IPR014014">
    <property type="entry name" value="RNA_helicase_DEAD_Q_motif"/>
</dbReference>
<dbReference type="PANTHER" id="PTHR47958">
    <property type="entry name" value="ATP-DEPENDENT RNA HELICASE DBP3"/>
    <property type="match status" value="1"/>
</dbReference>
<dbReference type="Pfam" id="PF00270">
    <property type="entry name" value="DEAD"/>
    <property type="match status" value="1"/>
</dbReference>
<dbReference type="Pfam" id="PF00271">
    <property type="entry name" value="Helicase_C"/>
    <property type="match status" value="1"/>
</dbReference>
<dbReference type="SMART" id="SM00487">
    <property type="entry name" value="DEXDc"/>
    <property type="match status" value="1"/>
</dbReference>
<dbReference type="SMART" id="SM00490">
    <property type="entry name" value="HELICc"/>
    <property type="match status" value="1"/>
</dbReference>
<dbReference type="SUPFAM" id="SSF52540">
    <property type="entry name" value="P-loop containing nucleoside triphosphate hydrolases"/>
    <property type="match status" value="1"/>
</dbReference>
<dbReference type="PROSITE" id="PS00039">
    <property type="entry name" value="DEAD_ATP_HELICASE"/>
    <property type="match status" value="1"/>
</dbReference>
<dbReference type="PROSITE" id="PS51192">
    <property type="entry name" value="HELICASE_ATP_BIND_1"/>
    <property type="match status" value="1"/>
</dbReference>
<dbReference type="PROSITE" id="PS51194">
    <property type="entry name" value="HELICASE_CTER"/>
    <property type="match status" value="1"/>
</dbReference>
<dbReference type="PROSITE" id="PS51195">
    <property type="entry name" value="Q_MOTIF"/>
    <property type="match status" value="1"/>
</dbReference>
<proteinExistence type="inferred from homology"/>
<reference key="1">
    <citation type="journal article" date="2003" name="Nature">
        <title>The genome sequence of the filamentous fungus Neurospora crassa.</title>
        <authorList>
            <person name="Galagan J.E."/>
            <person name="Calvo S.E."/>
            <person name="Borkovich K.A."/>
            <person name="Selker E.U."/>
            <person name="Read N.D."/>
            <person name="Jaffe D.B."/>
            <person name="FitzHugh W."/>
            <person name="Ma L.-J."/>
            <person name="Smirnov S."/>
            <person name="Purcell S."/>
            <person name="Rehman B."/>
            <person name="Elkins T."/>
            <person name="Engels R."/>
            <person name="Wang S."/>
            <person name="Nielsen C.B."/>
            <person name="Butler J."/>
            <person name="Endrizzi M."/>
            <person name="Qui D."/>
            <person name="Ianakiev P."/>
            <person name="Bell-Pedersen D."/>
            <person name="Nelson M.A."/>
            <person name="Werner-Washburne M."/>
            <person name="Selitrennikoff C.P."/>
            <person name="Kinsey J.A."/>
            <person name="Braun E.L."/>
            <person name="Zelter A."/>
            <person name="Schulte U."/>
            <person name="Kothe G.O."/>
            <person name="Jedd G."/>
            <person name="Mewes H.-W."/>
            <person name="Staben C."/>
            <person name="Marcotte E."/>
            <person name="Greenberg D."/>
            <person name="Roy A."/>
            <person name="Foley K."/>
            <person name="Naylor J."/>
            <person name="Stange-Thomann N."/>
            <person name="Barrett R."/>
            <person name="Gnerre S."/>
            <person name="Kamal M."/>
            <person name="Kamvysselis M."/>
            <person name="Mauceli E.W."/>
            <person name="Bielke C."/>
            <person name="Rudd S."/>
            <person name="Frishman D."/>
            <person name="Krystofova S."/>
            <person name="Rasmussen C."/>
            <person name="Metzenberg R.L."/>
            <person name="Perkins D.D."/>
            <person name="Kroken S."/>
            <person name="Cogoni C."/>
            <person name="Macino G."/>
            <person name="Catcheside D.E.A."/>
            <person name="Li W."/>
            <person name="Pratt R.J."/>
            <person name="Osmani S.A."/>
            <person name="DeSouza C.P.C."/>
            <person name="Glass N.L."/>
            <person name="Orbach M.J."/>
            <person name="Berglund J.A."/>
            <person name="Voelker R."/>
            <person name="Yarden O."/>
            <person name="Plamann M."/>
            <person name="Seiler S."/>
            <person name="Dunlap J.C."/>
            <person name="Radford A."/>
            <person name="Aramayo R."/>
            <person name="Natvig D.O."/>
            <person name="Alex L.A."/>
            <person name="Mannhaupt G."/>
            <person name="Ebbole D.J."/>
            <person name="Freitag M."/>
            <person name="Paulsen I."/>
            <person name="Sachs M.S."/>
            <person name="Lander E.S."/>
            <person name="Nusbaum C."/>
            <person name="Birren B.W."/>
        </authorList>
    </citation>
    <scope>NUCLEOTIDE SEQUENCE [LARGE SCALE GENOMIC DNA]</scope>
    <source>
        <strain>ATCC 24698 / 74-OR23-1A / CBS 708.71 / DSM 1257 / FGSC 987</strain>
    </source>
</reference>
<comment type="function">
    <text evidence="1">ATP-dependent RNA helicase involved nonsense-mediated mRNA decay and ribosome biogenesis through rRNA processing.</text>
</comment>
<comment type="catalytic activity">
    <reaction>
        <text>ATP + H2O = ADP + phosphate + H(+)</text>
        <dbReference type="Rhea" id="RHEA:13065"/>
        <dbReference type="ChEBI" id="CHEBI:15377"/>
        <dbReference type="ChEBI" id="CHEBI:15378"/>
        <dbReference type="ChEBI" id="CHEBI:30616"/>
        <dbReference type="ChEBI" id="CHEBI:43474"/>
        <dbReference type="ChEBI" id="CHEBI:456216"/>
        <dbReference type="EC" id="3.6.4.13"/>
    </reaction>
</comment>
<comment type="subunit">
    <text evidence="1">Associates with polysomes.</text>
</comment>
<comment type="subcellular location">
    <subcellularLocation>
        <location evidence="1">Cytoplasm</location>
    </subcellularLocation>
    <subcellularLocation>
        <location evidence="1">Nucleus</location>
    </subcellularLocation>
</comment>
<comment type="domain">
    <text>The Q motif is unique to and characteristic of the DEAD box family of RNA helicases and controls ATP binding and hydrolysis.</text>
</comment>
<comment type="similarity">
    <text evidence="5">Belongs to the DEAD box helicase family. DDX5/DBP2 subfamily.</text>
</comment>